<organism>
    <name type="scientific">Escherichia coli (strain K12)</name>
    <dbReference type="NCBI Taxonomy" id="83333"/>
    <lineage>
        <taxon>Bacteria</taxon>
        <taxon>Pseudomonadati</taxon>
        <taxon>Pseudomonadota</taxon>
        <taxon>Gammaproteobacteria</taxon>
        <taxon>Enterobacterales</taxon>
        <taxon>Enterobacteriaceae</taxon>
        <taxon>Escherichia</taxon>
    </lineage>
</organism>
<feature type="chain" id="PRO_0000168625" description="Inner membrane protein YbaN">
    <location>
        <begin position="1"/>
        <end position="125"/>
    </location>
</feature>
<feature type="topological domain" description="Cytoplasmic" evidence="1">
    <location>
        <begin position="1"/>
        <end position="6"/>
    </location>
</feature>
<feature type="transmembrane region" description="Helical" evidence="1">
    <location>
        <begin position="7"/>
        <end position="26"/>
    </location>
</feature>
<feature type="topological domain" description="Periplasmic" evidence="1">
    <location>
        <begin position="27"/>
        <end position="45"/>
    </location>
</feature>
<feature type="transmembrane region" description="Helical" evidence="1">
    <location>
        <begin position="46"/>
        <end position="63"/>
    </location>
</feature>
<feature type="topological domain" description="Cytoplasmic" evidence="1">
    <location>
        <begin position="64"/>
        <end position="74"/>
    </location>
</feature>
<feature type="transmembrane region" description="Helical" evidence="1">
    <location>
        <begin position="75"/>
        <end position="92"/>
    </location>
</feature>
<feature type="topological domain" description="Periplasmic" evidence="1">
    <location>
        <begin position="93"/>
        <end position="95"/>
    </location>
</feature>
<feature type="transmembrane region" description="Helical" evidence="1">
    <location>
        <begin position="96"/>
        <end position="118"/>
    </location>
</feature>
<feature type="topological domain" description="Cytoplasmic" evidence="1">
    <location>
        <begin position="119"/>
        <end position="125"/>
    </location>
</feature>
<feature type="sequence conflict" description="In Ref. 4." evidence="2" ref="4">
    <original>P</original>
    <variation>R</variation>
    <location>
        <position position="70"/>
    </location>
</feature>
<proteinExistence type="evidence at protein level"/>
<comment type="subcellular location">
    <subcellularLocation>
        <location>Cell inner membrane</location>
        <topology>Multi-pass membrane protein</topology>
    </subcellularLocation>
</comment>
<name>YBAN_ECOLI</name>
<accession>P0AAR5</accession>
<accession>P45808</accession>
<accession>P77478</accession>
<accession>Q2MBV9</accession>
<evidence type="ECO:0000255" key="1"/>
<evidence type="ECO:0000305" key="2"/>
<gene>
    <name type="primary">ybaN</name>
    <name type="ordered locus">b0468</name>
    <name type="ordered locus">JW0457</name>
</gene>
<protein>
    <recommendedName>
        <fullName>Inner membrane protein YbaN</fullName>
    </recommendedName>
</protein>
<dbReference type="EMBL" id="U82664">
    <property type="protein sequence ID" value="AAB40222.1"/>
    <property type="molecule type" value="Genomic_DNA"/>
</dbReference>
<dbReference type="EMBL" id="U00096">
    <property type="protein sequence ID" value="AAC73570.1"/>
    <property type="molecule type" value="Genomic_DNA"/>
</dbReference>
<dbReference type="EMBL" id="AP009048">
    <property type="protein sequence ID" value="BAE76247.1"/>
    <property type="molecule type" value="Genomic_DNA"/>
</dbReference>
<dbReference type="EMBL" id="D13958">
    <property type="status" value="NOT_ANNOTATED_CDS"/>
    <property type="molecule type" value="Genomic_DNA"/>
</dbReference>
<dbReference type="EMBL" id="U38660">
    <property type="protein sequence ID" value="AAA81028.1"/>
    <property type="molecule type" value="Genomic_DNA"/>
</dbReference>
<dbReference type="PIR" id="C64777">
    <property type="entry name" value="C64777"/>
</dbReference>
<dbReference type="RefSeq" id="NP_415001.1">
    <property type="nucleotide sequence ID" value="NC_000913.3"/>
</dbReference>
<dbReference type="RefSeq" id="WP_001188905.1">
    <property type="nucleotide sequence ID" value="NZ_STEB01000007.1"/>
</dbReference>
<dbReference type="BioGRID" id="4261713">
    <property type="interactions" value="10"/>
</dbReference>
<dbReference type="FunCoup" id="P0AAR5">
    <property type="interactions" value="119"/>
</dbReference>
<dbReference type="STRING" id="511145.b0468"/>
<dbReference type="PaxDb" id="511145-b0468"/>
<dbReference type="DNASU" id="945558"/>
<dbReference type="EnsemblBacteria" id="AAC73570">
    <property type="protein sequence ID" value="AAC73570"/>
    <property type="gene ID" value="b0468"/>
</dbReference>
<dbReference type="GeneID" id="945558"/>
<dbReference type="KEGG" id="ecj:JW0457"/>
<dbReference type="KEGG" id="eco:b0468"/>
<dbReference type="KEGG" id="ecoc:C3026_02300"/>
<dbReference type="PATRIC" id="fig|1411691.4.peg.1808"/>
<dbReference type="EchoBASE" id="EB2692"/>
<dbReference type="eggNOG" id="COG2832">
    <property type="taxonomic scope" value="Bacteria"/>
</dbReference>
<dbReference type="HOGENOM" id="CLU_113299_1_0_6"/>
<dbReference type="InParanoid" id="P0AAR5"/>
<dbReference type="OMA" id="SPRFHDW"/>
<dbReference type="OrthoDB" id="9816293at2"/>
<dbReference type="PhylomeDB" id="P0AAR5"/>
<dbReference type="BioCyc" id="EcoCyc:EG12843-MONOMER"/>
<dbReference type="PRO" id="PR:P0AAR5"/>
<dbReference type="Proteomes" id="UP000000625">
    <property type="component" value="Chromosome"/>
</dbReference>
<dbReference type="GO" id="GO:0005886">
    <property type="term" value="C:plasma membrane"/>
    <property type="evidence" value="ECO:0000314"/>
    <property type="project" value="EcoCyc"/>
</dbReference>
<dbReference type="InterPro" id="IPR007401">
    <property type="entry name" value="DUF454"/>
</dbReference>
<dbReference type="NCBIfam" id="NF007818">
    <property type="entry name" value="PRK10527.1"/>
    <property type="match status" value="1"/>
</dbReference>
<dbReference type="PANTHER" id="PTHR35813">
    <property type="entry name" value="INNER MEMBRANE PROTEIN YBAN"/>
    <property type="match status" value="1"/>
</dbReference>
<dbReference type="PANTHER" id="PTHR35813:SF1">
    <property type="entry name" value="INNER MEMBRANE PROTEIN YBAN"/>
    <property type="match status" value="1"/>
</dbReference>
<dbReference type="Pfam" id="PF04304">
    <property type="entry name" value="DUF454"/>
    <property type="match status" value="1"/>
</dbReference>
<dbReference type="PIRSF" id="PIRSF016789">
    <property type="entry name" value="DUF454"/>
    <property type="match status" value="1"/>
</dbReference>
<keyword id="KW-0997">Cell inner membrane</keyword>
<keyword id="KW-1003">Cell membrane</keyword>
<keyword id="KW-0472">Membrane</keyword>
<keyword id="KW-1185">Reference proteome</keyword>
<keyword id="KW-0812">Transmembrane</keyword>
<keyword id="KW-1133">Transmembrane helix</keyword>
<reference key="1">
    <citation type="submission" date="1997-01" db="EMBL/GenBank/DDBJ databases">
        <title>Sequence of minutes 4-25 of Escherichia coli.</title>
        <authorList>
            <person name="Chung E."/>
            <person name="Allen E."/>
            <person name="Araujo R."/>
            <person name="Aparicio A.M."/>
            <person name="Davis K."/>
            <person name="Duncan M."/>
            <person name="Federspiel N."/>
            <person name="Hyman R."/>
            <person name="Kalman S."/>
            <person name="Komp C."/>
            <person name="Kurdi O."/>
            <person name="Lew H."/>
            <person name="Lin D."/>
            <person name="Namath A."/>
            <person name="Oefner P."/>
            <person name="Roberts D."/>
            <person name="Schramm S."/>
            <person name="Davis R.W."/>
        </authorList>
    </citation>
    <scope>NUCLEOTIDE SEQUENCE [LARGE SCALE GENOMIC DNA]</scope>
    <source>
        <strain>K12 / MG1655 / ATCC 47076</strain>
    </source>
</reference>
<reference key="2">
    <citation type="journal article" date="1997" name="Science">
        <title>The complete genome sequence of Escherichia coli K-12.</title>
        <authorList>
            <person name="Blattner F.R."/>
            <person name="Plunkett G. III"/>
            <person name="Bloch C.A."/>
            <person name="Perna N.T."/>
            <person name="Burland V."/>
            <person name="Riley M."/>
            <person name="Collado-Vides J."/>
            <person name="Glasner J.D."/>
            <person name="Rode C.K."/>
            <person name="Mayhew G.F."/>
            <person name="Gregor J."/>
            <person name="Davis N.W."/>
            <person name="Kirkpatrick H.A."/>
            <person name="Goeden M.A."/>
            <person name="Rose D.J."/>
            <person name="Mau B."/>
            <person name="Shao Y."/>
        </authorList>
    </citation>
    <scope>NUCLEOTIDE SEQUENCE [LARGE SCALE GENOMIC DNA]</scope>
    <source>
        <strain>K12 / MG1655 / ATCC 47076</strain>
    </source>
</reference>
<reference key="3">
    <citation type="journal article" date="2006" name="Mol. Syst. Biol.">
        <title>Highly accurate genome sequences of Escherichia coli K-12 strains MG1655 and W3110.</title>
        <authorList>
            <person name="Hayashi K."/>
            <person name="Morooka N."/>
            <person name="Yamamoto Y."/>
            <person name="Fujita K."/>
            <person name="Isono K."/>
            <person name="Choi S."/>
            <person name="Ohtsubo E."/>
            <person name="Baba T."/>
            <person name="Wanner B.L."/>
            <person name="Mori H."/>
            <person name="Horiuchi T."/>
        </authorList>
    </citation>
    <scope>NUCLEOTIDE SEQUENCE [LARGE SCALE GENOMIC DNA]</scope>
    <source>
        <strain>K12 / W3110 / ATCC 27325 / DSM 5911</strain>
    </source>
</reference>
<reference key="4">
    <citation type="journal article" date="1991" name="J. Biol. Chem.">
        <title>The priB and priC replication proteins of Escherichia coli. Genes, DNA sequence, overexpression, and purification.</title>
        <authorList>
            <person name="Zavitz K.H."/>
            <person name="Digate R.J."/>
            <person name="Marians K.J."/>
        </authorList>
    </citation>
    <scope>NUCLEOTIDE SEQUENCE [GENOMIC DNA] OF 1-115</scope>
    <source>
        <strain>K12</strain>
    </source>
</reference>
<reference key="5">
    <citation type="submission" date="1995-10" db="EMBL/GenBank/DDBJ databases">
        <authorList>
            <person name="Robison K."/>
            <person name="Estep P.E."/>
            <person name="O'Keeffe T."/>
            <person name="Church G.M."/>
        </authorList>
    </citation>
    <scope>NUCLEOTIDE SEQUENCE [GENOMIC DNA] OF 95-125</scope>
    <source>
        <strain>K12 / EMG2</strain>
    </source>
</reference>
<reference key="6">
    <citation type="journal article" date="1995" name="Nucleic Acids Res.">
        <title>Detection of new genes in a bacterial genome using Markov models for three gene classes.</title>
        <authorList>
            <person name="Borodovsky M."/>
            <person name="McIninch J."/>
            <person name="Koonin E.V."/>
            <person name="Rudd K.E."/>
            <person name="Medigue C."/>
            <person name="Danchin A."/>
        </authorList>
    </citation>
    <scope>IDENTIFICATION</scope>
</reference>
<reference key="7">
    <citation type="journal article" date="2005" name="Science">
        <title>Global topology analysis of the Escherichia coli inner membrane proteome.</title>
        <authorList>
            <person name="Daley D.O."/>
            <person name="Rapp M."/>
            <person name="Granseth E."/>
            <person name="Melen K."/>
            <person name="Drew D."/>
            <person name="von Heijne G."/>
        </authorList>
    </citation>
    <scope>TOPOLOGY [LARGE SCALE ANALYSIS]</scope>
    <source>
        <strain>K12 / MG1655 / ATCC 47076</strain>
    </source>
</reference>
<sequence length="125" mass="14770">MQRIILIIIGWLAVVLGTLGVVLPVLPTTPFILLAAWCFARSSPRFHAWLLYRSWFGSYLRFWQKHHAMPRGVKPRAILLILLTFAISLWFVQMPWVRIMLLVILACLLFYMWRIPVIDEKQEKH</sequence>